<reference key="1">
    <citation type="submission" date="2008-04" db="EMBL/GenBank/DDBJ databases">
        <title>Complete sequence of chromosome of Natranaerobius thermophilus JW/NM-WN-LF.</title>
        <authorList>
            <consortium name="US DOE Joint Genome Institute"/>
            <person name="Copeland A."/>
            <person name="Lucas S."/>
            <person name="Lapidus A."/>
            <person name="Glavina del Rio T."/>
            <person name="Dalin E."/>
            <person name="Tice H."/>
            <person name="Bruce D."/>
            <person name="Goodwin L."/>
            <person name="Pitluck S."/>
            <person name="Chertkov O."/>
            <person name="Brettin T."/>
            <person name="Detter J.C."/>
            <person name="Han C."/>
            <person name="Kuske C.R."/>
            <person name="Schmutz J."/>
            <person name="Larimer F."/>
            <person name="Land M."/>
            <person name="Hauser L."/>
            <person name="Kyrpides N."/>
            <person name="Lykidis A."/>
            <person name="Mesbah N.M."/>
            <person name="Wiegel J."/>
        </authorList>
    </citation>
    <scope>NUCLEOTIDE SEQUENCE [LARGE SCALE GENOMIC DNA]</scope>
    <source>
        <strain>ATCC BAA-1301 / DSM 18059 / JW/NM-WN-LF</strain>
    </source>
</reference>
<gene>
    <name evidence="1" type="primary">rnc</name>
    <name type="ordered locus">Nther_1363</name>
</gene>
<accession>B2A2N1</accession>
<feature type="chain" id="PRO_1000094121" description="Ribonuclease 3">
    <location>
        <begin position="1"/>
        <end position="230"/>
    </location>
</feature>
<feature type="domain" description="RNase III" evidence="1">
    <location>
        <begin position="8"/>
        <end position="135"/>
    </location>
</feature>
<feature type="domain" description="DRBM" evidence="1">
    <location>
        <begin position="161"/>
        <end position="230"/>
    </location>
</feature>
<feature type="active site" evidence="1">
    <location>
        <position position="52"/>
    </location>
</feature>
<feature type="active site" evidence="1">
    <location>
        <position position="124"/>
    </location>
</feature>
<feature type="binding site" evidence="1">
    <location>
        <position position="48"/>
    </location>
    <ligand>
        <name>Mg(2+)</name>
        <dbReference type="ChEBI" id="CHEBI:18420"/>
    </ligand>
</feature>
<feature type="binding site" evidence="1">
    <location>
        <position position="121"/>
    </location>
    <ligand>
        <name>Mg(2+)</name>
        <dbReference type="ChEBI" id="CHEBI:18420"/>
    </ligand>
</feature>
<feature type="binding site" evidence="1">
    <location>
        <position position="124"/>
    </location>
    <ligand>
        <name>Mg(2+)</name>
        <dbReference type="ChEBI" id="CHEBI:18420"/>
    </ligand>
</feature>
<dbReference type="EC" id="3.1.26.3" evidence="1"/>
<dbReference type="EMBL" id="CP001034">
    <property type="protein sequence ID" value="ACB84946.1"/>
    <property type="molecule type" value="Genomic_DNA"/>
</dbReference>
<dbReference type="RefSeq" id="WP_012447821.1">
    <property type="nucleotide sequence ID" value="NC_010718.1"/>
</dbReference>
<dbReference type="SMR" id="B2A2N1"/>
<dbReference type="FunCoup" id="B2A2N1">
    <property type="interactions" value="341"/>
</dbReference>
<dbReference type="STRING" id="457570.Nther_1363"/>
<dbReference type="KEGG" id="nth:Nther_1363"/>
<dbReference type="eggNOG" id="COG0571">
    <property type="taxonomic scope" value="Bacteria"/>
</dbReference>
<dbReference type="HOGENOM" id="CLU_000907_1_3_9"/>
<dbReference type="InParanoid" id="B2A2N1"/>
<dbReference type="OrthoDB" id="9805026at2"/>
<dbReference type="Proteomes" id="UP000001683">
    <property type="component" value="Chromosome"/>
</dbReference>
<dbReference type="GO" id="GO:0005737">
    <property type="term" value="C:cytoplasm"/>
    <property type="evidence" value="ECO:0007669"/>
    <property type="project" value="UniProtKB-SubCell"/>
</dbReference>
<dbReference type="GO" id="GO:0003725">
    <property type="term" value="F:double-stranded RNA binding"/>
    <property type="evidence" value="ECO:0007669"/>
    <property type="project" value="TreeGrafter"/>
</dbReference>
<dbReference type="GO" id="GO:0046872">
    <property type="term" value="F:metal ion binding"/>
    <property type="evidence" value="ECO:0007669"/>
    <property type="project" value="UniProtKB-KW"/>
</dbReference>
<dbReference type="GO" id="GO:0004525">
    <property type="term" value="F:ribonuclease III activity"/>
    <property type="evidence" value="ECO:0007669"/>
    <property type="project" value="UniProtKB-UniRule"/>
</dbReference>
<dbReference type="GO" id="GO:0019843">
    <property type="term" value="F:rRNA binding"/>
    <property type="evidence" value="ECO:0007669"/>
    <property type="project" value="UniProtKB-KW"/>
</dbReference>
<dbReference type="GO" id="GO:0006397">
    <property type="term" value="P:mRNA processing"/>
    <property type="evidence" value="ECO:0007669"/>
    <property type="project" value="UniProtKB-UniRule"/>
</dbReference>
<dbReference type="GO" id="GO:0010468">
    <property type="term" value="P:regulation of gene expression"/>
    <property type="evidence" value="ECO:0007669"/>
    <property type="project" value="TreeGrafter"/>
</dbReference>
<dbReference type="GO" id="GO:0006364">
    <property type="term" value="P:rRNA processing"/>
    <property type="evidence" value="ECO:0007669"/>
    <property type="project" value="UniProtKB-UniRule"/>
</dbReference>
<dbReference type="GO" id="GO:0008033">
    <property type="term" value="P:tRNA processing"/>
    <property type="evidence" value="ECO:0007669"/>
    <property type="project" value="UniProtKB-KW"/>
</dbReference>
<dbReference type="CDD" id="cd10845">
    <property type="entry name" value="DSRM_RNAse_III_family"/>
    <property type="match status" value="1"/>
</dbReference>
<dbReference type="CDD" id="cd00593">
    <property type="entry name" value="RIBOc"/>
    <property type="match status" value="1"/>
</dbReference>
<dbReference type="FunFam" id="1.10.1520.10:FF:000001">
    <property type="entry name" value="Ribonuclease 3"/>
    <property type="match status" value="1"/>
</dbReference>
<dbReference type="FunFam" id="3.30.160.20:FF:000003">
    <property type="entry name" value="Ribonuclease 3"/>
    <property type="match status" value="1"/>
</dbReference>
<dbReference type="Gene3D" id="3.30.160.20">
    <property type="match status" value="1"/>
</dbReference>
<dbReference type="Gene3D" id="1.10.1520.10">
    <property type="entry name" value="Ribonuclease III domain"/>
    <property type="match status" value="1"/>
</dbReference>
<dbReference type="HAMAP" id="MF_00104">
    <property type="entry name" value="RNase_III"/>
    <property type="match status" value="1"/>
</dbReference>
<dbReference type="InterPro" id="IPR014720">
    <property type="entry name" value="dsRBD_dom"/>
</dbReference>
<dbReference type="InterPro" id="IPR011907">
    <property type="entry name" value="RNase_III"/>
</dbReference>
<dbReference type="InterPro" id="IPR000999">
    <property type="entry name" value="RNase_III_dom"/>
</dbReference>
<dbReference type="InterPro" id="IPR036389">
    <property type="entry name" value="RNase_III_sf"/>
</dbReference>
<dbReference type="NCBIfam" id="TIGR02191">
    <property type="entry name" value="RNaseIII"/>
    <property type="match status" value="1"/>
</dbReference>
<dbReference type="PANTHER" id="PTHR11207:SF0">
    <property type="entry name" value="RIBONUCLEASE 3"/>
    <property type="match status" value="1"/>
</dbReference>
<dbReference type="PANTHER" id="PTHR11207">
    <property type="entry name" value="RIBONUCLEASE III"/>
    <property type="match status" value="1"/>
</dbReference>
<dbReference type="Pfam" id="PF00035">
    <property type="entry name" value="dsrm"/>
    <property type="match status" value="1"/>
</dbReference>
<dbReference type="Pfam" id="PF14622">
    <property type="entry name" value="Ribonucleas_3_3"/>
    <property type="match status" value="1"/>
</dbReference>
<dbReference type="SMART" id="SM00358">
    <property type="entry name" value="DSRM"/>
    <property type="match status" value="1"/>
</dbReference>
<dbReference type="SMART" id="SM00535">
    <property type="entry name" value="RIBOc"/>
    <property type="match status" value="1"/>
</dbReference>
<dbReference type="SUPFAM" id="SSF54768">
    <property type="entry name" value="dsRNA-binding domain-like"/>
    <property type="match status" value="1"/>
</dbReference>
<dbReference type="SUPFAM" id="SSF69065">
    <property type="entry name" value="RNase III domain-like"/>
    <property type="match status" value="1"/>
</dbReference>
<dbReference type="PROSITE" id="PS50137">
    <property type="entry name" value="DS_RBD"/>
    <property type="match status" value="1"/>
</dbReference>
<dbReference type="PROSITE" id="PS00517">
    <property type="entry name" value="RNASE_3_1"/>
    <property type="match status" value="1"/>
</dbReference>
<dbReference type="PROSITE" id="PS50142">
    <property type="entry name" value="RNASE_3_2"/>
    <property type="match status" value="1"/>
</dbReference>
<sequence>MGKECRDIVELKEKLGIYVDDKLLLQAVTHTSYAHEQKDVVDHNERLEFLGDAVLELAISETLYKKYPELPEGELTKLRAELVCELSLVKIAEKLDLGKYLRLGKGEDSTGGRDRRSTLADTVEALIGAVYLQTNYDQTKQLILDLFKDQLSHIDNQRIGDYKTMIQELVQDRYGDPPKYQIVKESGPDHDKSFVAEVQINNEVVGRGSGKSKKEAEQNAAHFAFQKLSK</sequence>
<name>RNC_NATTJ</name>
<organism>
    <name type="scientific">Natranaerobius thermophilus (strain ATCC BAA-1301 / DSM 18059 / JW/NM-WN-LF)</name>
    <dbReference type="NCBI Taxonomy" id="457570"/>
    <lineage>
        <taxon>Bacteria</taxon>
        <taxon>Bacillati</taxon>
        <taxon>Bacillota</taxon>
        <taxon>Clostridia</taxon>
        <taxon>Natranaerobiales</taxon>
        <taxon>Natranaerobiaceae</taxon>
        <taxon>Natranaerobius</taxon>
    </lineage>
</organism>
<protein>
    <recommendedName>
        <fullName evidence="1">Ribonuclease 3</fullName>
        <ecNumber evidence="1">3.1.26.3</ecNumber>
    </recommendedName>
    <alternativeName>
        <fullName evidence="1">Ribonuclease III</fullName>
        <shortName evidence="1">RNase III</shortName>
    </alternativeName>
</protein>
<comment type="function">
    <text evidence="1">Digests double-stranded RNA. Involved in the processing of primary rRNA transcript to yield the immediate precursors to the large and small rRNAs (23S and 16S). Processes some mRNAs, and tRNAs when they are encoded in the rRNA operon. Processes pre-crRNA and tracrRNA of type II CRISPR loci if present in the organism.</text>
</comment>
<comment type="catalytic activity">
    <reaction evidence="1">
        <text>Endonucleolytic cleavage to 5'-phosphomonoester.</text>
        <dbReference type="EC" id="3.1.26.3"/>
    </reaction>
</comment>
<comment type="cofactor">
    <cofactor evidence="1">
        <name>Mg(2+)</name>
        <dbReference type="ChEBI" id="CHEBI:18420"/>
    </cofactor>
</comment>
<comment type="subunit">
    <text evidence="1">Homodimer.</text>
</comment>
<comment type="subcellular location">
    <subcellularLocation>
        <location evidence="1">Cytoplasm</location>
    </subcellularLocation>
</comment>
<comment type="similarity">
    <text evidence="1">Belongs to the ribonuclease III family.</text>
</comment>
<keyword id="KW-0963">Cytoplasm</keyword>
<keyword id="KW-0255">Endonuclease</keyword>
<keyword id="KW-0378">Hydrolase</keyword>
<keyword id="KW-0460">Magnesium</keyword>
<keyword id="KW-0479">Metal-binding</keyword>
<keyword id="KW-0507">mRNA processing</keyword>
<keyword id="KW-0540">Nuclease</keyword>
<keyword id="KW-1185">Reference proteome</keyword>
<keyword id="KW-0694">RNA-binding</keyword>
<keyword id="KW-0698">rRNA processing</keyword>
<keyword id="KW-0699">rRNA-binding</keyword>
<keyword id="KW-0819">tRNA processing</keyword>
<proteinExistence type="inferred from homology"/>
<evidence type="ECO:0000255" key="1">
    <source>
        <dbReference type="HAMAP-Rule" id="MF_00104"/>
    </source>
</evidence>